<feature type="chain" id="PRO_1000194028" description="Large ribosomal subunit protein uL29">
    <location>
        <begin position="1"/>
        <end position="78"/>
    </location>
</feature>
<dbReference type="EMBL" id="AP011115">
    <property type="protein sequence ID" value="BAH54441.1"/>
    <property type="molecule type" value="Genomic_DNA"/>
</dbReference>
<dbReference type="RefSeq" id="WP_005239637.1">
    <property type="nucleotide sequence ID" value="NC_012522.1"/>
</dbReference>
<dbReference type="SMR" id="C1B020"/>
<dbReference type="STRING" id="632772.ROP_61940"/>
<dbReference type="GeneID" id="69890524"/>
<dbReference type="KEGG" id="rop:ROP_61940"/>
<dbReference type="PATRIC" id="fig|632772.20.peg.6470"/>
<dbReference type="HOGENOM" id="CLU_158491_3_3_11"/>
<dbReference type="OrthoDB" id="9815192at2"/>
<dbReference type="Proteomes" id="UP000002212">
    <property type="component" value="Chromosome"/>
</dbReference>
<dbReference type="GO" id="GO:0022625">
    <property type="term" value="C:cytosolic large ribosomal subunit"/>
    <property type="evidence" value="ECO:0007669"/>
    <property type="project" value="TreeGrafter"/>
</dbReference>
<dbReference type="GO" id="GO:0003735">
    <property type="term" value="F:structural constituent of ribosome"/>
    <property type="evidence" value="ECO:0007669"/>
    <property type="project" value="InterPro"/>
</dbReference>
<dbReference type="GO" id="GO:0006412">
    <property type="term" value="P:translation"/>
    <property type="evidence" value="ECO:0007669"/>
    <property type="project" value="UniProtKB-UniRule"/>
</dbReference>
<dbReference type="CDD" id="cd00427">
    <property type="entry name" value="Ribosomal_L29_HIP"/>
    <property type="match status" value="1"/>
</dbReference>
<dbReference type="FunFam" id="1.10.287.310:FF:000001">
    <property type="entry name" value="50S ribosomal protein L29"/>
    <property type="match status" value="1"/>
</dbReference>
<dbReference type="Gene3D" id="1.10.287.310">
    <property type="match status" value="1"/>
</dbReference>
<dbReference type="HAMAP" id="MF_00374">
    <property type="entry name" value="Ribosomal_uL29"/>
    <property type="match status" value="1"/>
</dbReference>
<dbReference type="InterPro" id="IPR050063">
    <property type="entry name" value="Ribosomal_protein_uL29"/>
</dbReference>
<dbReference type="InterPro" id="IPR001854">
    <property type="entry name" value="Ribosomal_uL29"/>
</dbReference>
<dbReference type="InterPro" id="IPR018254">
    <property type="entry name" value="Ribosomal_uL29_CS"/>
</dbReference>
<dbReference type="InterPro" id="IPR036049">
    <property type="entry name" value="Ribosomal_uL29_sf"/>
</dbReference>
<dbReference type="NCBIfam" id="TIGR00012">
    <property type="entry name" value="L29"/>
    <property type="match status" value="1"/>
</dbReference>
<dbReference type="PANTHER" id="PTHR10916">
    <property type="entry name" value="60S RIBOSOMAL PROTEIN L35/50S RIBOSOMAL PROTEIN L29"/>
    <property type="match status" value="1"/>
</dbReference>
<dbReference type="PANTHER" id="PTHR10916:SF0">
    <property type="entry name" value="LARGE RIBOSOMAL SUBUNIT PROTEIN UL29C"/>
    <property type="match status" value="1"/>
</dbReference>
<dbReference type="Pfam" id="PF00831">
    <property type="entry name" value="Ribosomal_L29"/>
    <property type="match status" value="1"/>
</dbReference>
<dbReference type="SUPFAM" id="SSF46561">
    <property type="entry name" value="Ribosomal protein L29 (L29p)"/>
    <property type="match status" value="1"/>
</dbReference>
<dbReference type="PROSITE" id="PS00579">
    <property type="entry name" value="RIBOSOMAL_L29"/>
    <property type="match status" value="1"/>
</dbReference>
<reference key="1">
    <citation type="submission" date="2009-03" db="EMBL/GenBank/DDBJ databases">
        <title>Comparison of the complete genome sequences of Rhodococcus erythropolis PR4 and Rhodococcus opacus B4.</title>
        <authorList>
            <person name="Takarada H."/>
            <person name="Sekine M."/>
            <person name="Hosoyama A."/>
            <person name="Yamada R."/>
            <person name="Fujisawa T."/>
            <person name="Omata S."/>
            <person name="Shimizu A."/>
            <person name="Tsukatani N."/>
            <person name="Tanikawa S."/>
            <person name="Fujita N."/>
            <person name="Harayama S."/>
        </authorList>
    </citation>
    <scope>NUCLEOTIDE SEQUENCE [LARGE SCALE GENOMIC DNA]</scope>
    <source>
        <strain>B4</strain>
    </source>
</reference>
<accession>C1B020</accession>
<protein>
    <recommendedName>
        <fullName evidence="1">Large ribosomal subunit protein uL29</fullName>
    </recommendedName>
    <alternativeName>
        <fullName evidence="2">50S ribosomal protein L29</fullName>
    </alternativeName>
</protein>
<evidence type="ECO:0000255" key="1">
    <source>
        <dbReference type="HAMAP-Rule" id="MF_00374"/>
    </source>
</evidence>
<evidence type="ECO:0000305" key="2"/>
<sequence>MATGTPAAELRELTEEELVTRLRESKEELFNLRFQMATGQMDNNRRLRTVRHEIARIYTVLRERELGLAVGPDAGDAA</sequence>
<comment type="similarity">
    <text evidence="1">Belongs to the universal ribosomal protein uL29 family.</text>
</comment>
<name>RL29_RHOOB</name>
<keyword id="KW-0687">Ribonucleoprotein</keyword>
<keyword id="KW-0689">Ribosomal protein</keyword>
<gene>
    <name evidence="1" type="primary">rpmC</name>
    <name type="ordered locus">ROP_61940</name>
</gene>
<proteinExistence type="inferred from homology"/>
<organism>
    <name type="scientific">Rhodococcus opacus (strain B4)</name>
    <dbReference type="NCBI Taxonomy" id="632772"/>
    <lineage>
        <taxon>Bacteria</taxon>
        <taxon>Bacillati</taxon>
        <taxon>Actinomycetota</taxon>
        <taxon>Actinomycetes</taxon>
        <taxon>Mycobacteriales</taxon>
        <taxon>Nocardiaceae</taxon>
        <taxon>Rhodococcus</taxon>
    </lineage>
</organism>